<organism>
    <name type="scientific">Rickettsia africae (strain ESF-5)</name>
    <dbReference type="NCBI Taxonomy" id="347255"/>
    <lineage>
        <taxon>Bacteria</taxon>
        <taxon>Pseudomonadati</taxon>
        <taxon>Pseudomonadota</taxon>
        <taxon>Alphaproteobacteria</taxon>
        <taxon>Rickettsiales</taxon>
        <taxon>Rickettsiaceae</taxon>
        <taxon>Rickettsieae</taxon>
        <taxon>Rickettsia</taxon>
        <taxon>spotted fever group</taxon>
    </lineage>
</organism>
<gene>
    <name evidence="1" type="primary">der</name>
    <name type="synonym">engA</name>
    <name type="ordered locus">RAF_ORF0936</name>
</gene>
<keyword id="KW-0342">GTP-binding</keyword>
<keyword id="KW-0547">Nucleotide-binding</keyword>
<keyword id="KW-0677">Repeat</keyword>
<keyword id="KW-0690">Ribosome biogenesis</keyword>
<reference key="1">
    <citation type="journal article" date="2009" name="BMC Genomics">
        <title>Analysis of the Rickettsia africae genome reveals that virulence acquisition in Rickettsia species may be explained by genome reduction.</title>
        <authorList>
            <person name="Fournier P.-E."/>
            <person name="El Karkouri K."/>
            <person name="Leroy Q."/>
            <person name="Robert C."/>
            <person name="Giumelli B."/>
            <person name="Renesto P."/>
            <person name="Socolovschi C."/>
            <person name="Parola P."/>
            <person name="Audic S."/>
            <person name="Raoult D."/>
        </authorList>
    </citation>
    <scope>NUCLEOTIDE SEQUENCE [LARGE SCALE GENOMIC DNA]</scope>
    <source>
        <strain>ESF-5</strain>
    </source>
</reference>
<dbReference type="EMBL" id="CP001612">
    <property type="protein sequence ID" value="ACP53791.1"/>
    <property type="molecule type" value="Genomic_DNA"/>
</dbReference>
<dbReference type="RefSeq" id="WP_012719937.1">
    <property type="nucleotide sequence ID" value="NC_012633.1"/>
</dbReference>
<dbReference type="SMR" id="C3PPD1"/>
<dbReference type="KEGG" id="raf:RAF_ORF0936"/>
<dbReference type="HOGENOM" id="CLU_016077_5_0_5"/>
<dbReference type="Proteomes" id="UP000002305">
    <property type="component" value="Chromosome"/>
</dbReference>
<dbReference type="GO" id="GO:0005525">
    <property type="term" value="F:GTP binding"/>
    <property type="evidence" value="ECO:0007669"/>
    <property type="project" value="UniProtKB-UniRule"/>
</dbReference>
<dbReference type="GO" id="GO:0042254">
    <property type="term" value="P:ribosome biogenesis"/>
    <property type="evidence" value="ECO:0007669"/>
    <property type="project" value="UniProtKB-KW"/>
</dbReference>
<dbReference type="CDD" id="cd01894">
    <property type="entry name" value="EngA1"/>
    <property type="match status" value="1"/>
</dbReference>
<dbReference type="CDD" id="cd01895">
    <property type="entry name" value="EngA2"/>
    <property type="match status" value="1"/>
</dbReference>
<dbReference type="FunFam" id="3.30.300.20:FF:000004">
    <property type="entry name" value="GTPase Der"/>
    <property type="match status" value="1"/>
</dbReference>
<dbReference type="Gene3D" id="3.30.300.20">
    <property type="match status" value="1"/>
</dbReference>
<dbReference type="Gene3D" id="3.40.50.300">
    <property type="entry name" value="P-loop containing nucleotide triphosphate hydrolases"/>
    <property type="match status" value="2"/>
</dbReference>
<dbReference type="HAMAP" id="MF_00195">
    <property type="entry name" value="GTPase_Der"/>
    <property type="match status" value="1"/>
</dbReference>
<dbReference type="InterPro" id="IPR031166">
    <property type="entry name" value="G_ENGA"/>
</dbReference>
<dbReference type="InterPro" id="IPR006073">
    <property type="entry name" value="GTP-bd"/>
</dbReference>
<dbReference type="InterPro" id="IPR016484">
    <property type="entry name" value="GTPase_Der"/>
</dbReference>
<dbReference type="InterPro" id="IPR032859">
    <property type="entry name" value="KH_dom-like"/>
</dbReference>
<dbReference type="InterPro" id="IPR015946">
    <property type="entry name" value="KH_dom-like_a/b"/>
</dbReference>
<dbReference type="InterPro" id="IPR027417">
    <property type="entry name" value="P-loop_NTPase"/>
</dbReference>
<dbReference type="InterPro" id="IPR005225">
    <property type="entry name" value="Small_GTP-bd"/>
</dbReference>
<dbReference type="NCBIfam" id="TIGR03594">
    <property type="entry name" value="GTPase_EngA"/>
    <property type="match status" value="1"/>
</dbReference>
<dbReference type="NCBIfam" id="TIGR00231">
    <property type="entry name" value="small_GTP"/>
    <property type="match status" value="2"/>
</dbReference>
<dbReference type="PANTHER" id="PTHR43834">
    <property type="entry name" value="GTPASE DER"/>
    <property type="match status" value="1"/>
</dbReference>
<dbReference type="PANTHER" id="PTHR43834:SF6">
    <property type="entry name" value="GTPASE DER"/>
    <property type="match status" value="1"/>
</dbReference>
<dbReference type="Pfam" id="PF14714">
    <property type="entry name" value="KH_dom-like"/>
    <property type="match status" value="1"/>
</dbReference>
<dbReference type="Pfam" id="PF01926">
    <property type="entry name" value="MMR_HSR1"/>
    <property type="match status" value="2"/>
</dbReference>
<dbReference type="PIRSF" id="PIRSF006485">
    <property type="entry name" value="GTP-binding_EngA"/>
    <property type="match status" value="1"/>
</dbReference>
<dbReference type="SUPFAM" id="SSF52540">
    <property type="entry name" value="P-loop containing nucleoside triphosphate hydrolases"/>
    <property type="match status" value="2"/>
</dbReference>
<dbReference type="PROSITE" id="PS51712">
    <property type="entry name" value="G_ENGA"/>
    <property type="match status" value="2"/>
</dbReference>
<proteinExistence type="inferred from homology"/>
<sequence>MTKQIITLVGRPNVGKSTLFNRLSIRKKAIVHDLPGVTRDRKYTDGKIGSFEFLLIDTPGLDEHPNSMGERLIEQTTKAILEADLICFMVDGRSGILPDDKLLSSFVRKYNKPAILVVNKCEKAFDFDKEYYKLGFDSMIAISAEHGTGLIDLYDEIIAKLPEEESIKTNIADPIKGDCLQIVVSGRPNAGKSTFINALINDERLLTGPEAGITRESIEIDWQYKNNHIKLIDTAGLRKKSTITKSLEKLSASDTINSIKFANTVILMIDALAPLKQQDLNIASHVVNEGRSIVIVVNKWDLVKESEKEAFQEEFYYQINTHLPQVKGIPVLFISAINKQNIEQVLDACLKIYKIWNKKITTSKLNEWLNFTTEAHLLPLQKGGRRVRVKYMTQTKTRPPTFKLFSNNPEKITDSYTRYLVNNMREAFDMPGVPIRFIYVKTKNPYV</sequence>
<accession>C3PPD1</accession>
<name>DER_RICAE</name>
<evidence type="ECO:0000255" key="1">
    <source>
        <dbReference type="HAMAP-Rule" id="MF_00195"/>
    </source>
</evidence>
<protein>
    <recommendedName>
        <fullName evidence="1">GTPase Der</fullName>
    </recommendedName>
    <alternativeName>
        <fullName evidence="1">GTP-binding protein EngA</fullName>
    </alternativeName>
</protein>
<feature type="chain" id="PRO_1000204046" description="GTPase Der">
    <location>
        <begin position="1"/>
        <end position="447"/>
    </location>
</feature>
<feature type="domain" description="EngA-type G 1">
    <location>
        <begin position="4"/>
        <end position="165"/>
    </location>
</feature>
<feature type="domain" description="EngA-type G 2">
    <location>
        <begin position="180"/>
        <end position="357"/>
    </location>
</feature>
<feature type="domain" description="KH-like" evidence="1">
    <location>
        <begin position="358"/>
        <end position="443"/>
    </location>
</feature>
<feature type="binding site" evidence="1">
    <location>
        <begin position="10"/>
        <end position="17"/>
    </location>
    <ligand>
        <name>GTP</name>
        <dbReference type="ChEBI" id="CHEBI:37565"/>
        <label>1</label>
    </ligand>
</feature>
<feature type="binding site" evidence="1">
    <location>
        <begin position="57"/>
        <end position="61"/>
    </location>
    <ligand>
        <name>GTP</name>
        <dbReference type="ChEBI" id="CHEBI:37565"/>
        <label>1</label>
    </ligand>
</feature>
<feature type="binding site" evidence="1">
    <location>
        <begin position="119"/>
        <end position="122"/>
    </location>
    <ligand>
        <name>GTP</name>
        <dbReference type="ChEBI" id="CHEBI:37565"/>
        <label>1</label>
    </ligand>
</feature>
<feature type="binding site" evidence="1">
    <location>
        <begin position="186"/>
        <end position="193"/>
    </location>
    <ligand>
        <name>GTP</name>
        <dbReference type="ChEBI" id="CHEBI:37565"/>
        <label>2</label>
    </ligand>
</feature>
<feature type="binding site" evidence="1">
    <location>
        <begin position="233"/>
        <end position="237"/>
    </location>
    <ligand>
        <name>GTP</name>
        <dbReference type="ChEBI" id="CHEBI:37565"/>
        <label>2</label>
    </ligand>
</feature>
<feature type="binding site" evidence="1">
    <location>
        <begin position="298"/>
        <end position="301"/>
    </location>
    <ligand>
        <name>GTP</name>
        <dbReference type="ChEBI" id="CHEBI:37565"/>
        <label>2</label>
    </ligand>
</feature>
<comment type="function">
    <text evidence="1">GTPase that plays an essential role in the late steps of ribosome biogenesis.</text>
</comment>
<comment type="subunit">
    <text evidence="1">Associates with the 50S ribosomal subunit.</text>
</comment>
<comment type="similarity">
    <text evidence="1">Belongs to the TRAFAC class TrmE-Era-EngA-EngB-Septin-like GTPase superfamily. EngA (Der) GTPase family.</text>
</comment>